<comment type="function">
    <text evidence="1 4">Serine protease inhibitor which exhibits anti-trypsin activity (PubMed:5466061). In the pancreas, protects against trypsin-catalyzed premature activation of zymogens (By similarity).</text>
</comment>
<comment type="function">
    <text evidence="1">In the male reproductive tract, binds to sperm heads where it modulates sperm capacitance by inhibiting calcium uptake and nitrogen oxide (NO) production.</text>
</comment>
<comment type="subcellular location">
    <subcellularLocation>
        <location evidence="4 5">Secreted</location>
    </subcellularLocation>
</comment>
<accession>P00998</accession>
<dbReference type="PIR" id="A91174">
    <property type="entry name" value="TIPG"/>
</dbReference>
<dbReference type="PDB" id="1TGS">
    <property type="method" value="X-ray"/>
    <property type="resolution" value="1.80 A"/>
    <property type="chains" value="I=1-56"/>
</dbReference>
<dbReference type="PDBsum" id="1TGS"/>
<dbReference type="SMR" id="P00998"/>
<dbReference type="FunCoup" id="P00998">
    <property type="interactions" value="21"/>
</dbReference>
<dbReference type="MINT" id="P00998"/>
<dbReference type="STRING" id="9823.ENSSSCP00000058066"/>
<dbReference type="MEROPS" id="I01.011"/>
<dbReference type="PaxDb" id="9823-ENSSSCP00000022179"/>
<dbReference type="PeptideAtlas" id="P00998"/>
<dbReference type="eggNOG" id="KOG3649">
    <property type="taxonomic scope" value="Eukaryota"/>
</dbReference>
<dbReference type="HOGENOM" id="CLU_169765_6_0_1"/>
<dbReference type="InParanoid" id="P00998"/>
<dbReference type="EvolutionaryTrace" id="P00998"/>
<dbReference type="Proteomes" id="UP000008227">
    <property type="component" value="Unplaced"/>
</dbReference>
<dbReference type="Proteomes" id="UP000314985">
    <property type="component" value="Unplaced"/>
</dbReference>
<dbReference type="Proteomes" id="UP000694570">
    <property type="component" value="Unplaced"/>
</dbReference>
<dbReference type="Proteomes" id="UP000694571">
    <property type="component" value="Unplaced"/>
</dbReference>
<dbReference type="Proteomes" id="UP000694720">
    <property type="component" value="Unplaced"/>
</dbReference>
<dbReference type="Proteomes" id="UP000694722">
    <property type="component" value="Unplaced"/>
</dbReference>
<dbReference type="Proteomes" id="UP000694723">
    <property type="component" value="Unplaced"/>
</dbReference>
<dbReference type="Proteomes" id="UP000694724">
    <property type="component" value="Unplaced"/>
</dbReference>
<dbReference type="Proteomes" id="UP000694725">
    <property type="component" value="Unplaced"/>
</dbReference>
<dbReference type="Proteomes" id="UP000694726">
    <property type="component" value="Unplaced"/>
</dbReference>
<dbReference type="Proteomes" id="UP000694727">
    <property type="component" value="Unplaced"/>
</dbReference>
<dbReference type="Proteomes" id="UP000694728">
    <property type="component" value="Unplaced"/>
</dbReference>
<dbReference type="GO" id="GO:0005576">
    <property type="term" value="C:extracellular region"/>
    <property type="evidence" value="ECO:0007669"/>
    <property type="project" value="UniProtKB-SubCell"/>
</dbReference>
<dbReference type="GO" id="GO:0004867">
    <property type="term" value="F:serine-type endopeptidase inhibitor activity"/>
    <property type="evidence" value="ECO:0007669"/>
    <property type="project" value="UniProtKB-KW"/>
</dbReference>
<dbReference type="CDD" id="cd01327">
    <property type="entry name" value="KAZAL_PSTI"/>
    <property type="match status" value="1"/>
</dbReference>
<dbReference type="FunFam" id="3.30.60.30:FF:000031">
    <property type="entry name" value="Serine protease inhibitor Kazal-type 2"/>
    <property type="match status" value="1"/>
</dbReference>
<dbReference type="Gene3D" id="3.30.60.30">
    <property type="match status" value="1"/>
</dbReference>
<dbReference type="InterPro" id="IPR002350">
    <property type="entry name" value="Kazal_dom"/>
</dbReference>
<dbReference type="InterPro" id="IPR036058">
    <property type="entry name" value="Kazal_dom_sf"/>
</dbReference>
<dbReference type="InterPro" id="IPR001239">
    <property type="entry name" value="Prot_inh_Kazal-m"/>
</dbReference>
<dbReference type="PANTHER" id="PTHR21312">
    <property type="entry name" value="SERINE PROTEASE INHIBITOR"/>
    <property type="match status" value="1"/>
</dbReference>
<dbReference type="PANTHER" id="PTHR21312:SF27">
    <property type="entry name" value="SERINE PROTEASE INHIBITOR KAZAL-TYPE 1"/>
    <property type="match status" value="1"/>
</dbReference>
<dbReference type="Pfam" id="PF00050">
    <property type="entry name" value="Kazal_1"/>
    <property type="match status" value="1"/>
</dbReference>
<dbReference type="PRINTS" id="PR00290">
    <property type="entry name" value="KAZALINHBTR"/>
</dbReference>
<dbReference type="SMART" id="SM00280">
    <property type="entry name" value="KAZAL"/>
    <property type="match status" value="1"/>
</dbReference>
<dbReference type="SUPFAM" id="SSF100895">
    <property type="entry name" value="Kazal-type serine protease inhibitors"/>
    <property type="match status" value="1"/>
</dbReference>
<dbReference type="PROSITE" id="PS00282">
    <property type="entry name" value="KAZAL_1"/>
    <property type="match status" value="1"/>
</dbReference>
<dbReference type="PROSITE" id="PS51465">
    <property type="entry name" value="KAZAL_2"/>
    <property type="match status" value="1"/>
</dbReference>
<name>ISK1_PIG</name>
<proteinExistence type="evidence at protein level"/>
<gene>
    <name type="primary">SPINK1</name>
    <name type="synonym">PSTI</name>
</gene>
<reference key="1">
    <citation type="journal article" date="1970" name="Eur. J. Biochem.">
        <title>The structure of the porcine pancreatic secretory trypsin inhibitor. I. A sequence determination by Edman degradation and mass spectral identification of the p-bromophenyl-thiohydantoins.</title>
        <authorList>
            <person name="Tschesche H."/>
            <person name="Wachter E."/>
        </authorList>
    </citation>
    <scope>PROTEIN SEQUENCE</scope>
    <scope>FUNCTION</scope>
    <scope>SUBCELLULAR LOCATION</scope>
</reference>
<reference key="2">
    <citation type="journal article" date="1971" name="J. Biol. Chem.">
        <title>The primary structure of the porcine pancreatic secretory trypsin inhibitor. I. Amino acid sequence of the reduced S-aminoethylated protein.</title>
        <authorList>
            <person name="Bartelt D.C."/>
            <person name="Greene L.J."/>
        </authorList>
    </citation>
    <scope>PROTEIN SEQUENCE</scope>
</reference>
<reference key="3">
    <citation type="journal article" date="1972" name="Hoppe-Seyler's Z. Physiol. Chem.">
        <title>Disulfide bridges of the secretory trypsin inhibitor from procine pancreas and the degradation of covalent structure during the temporary inhibition.</title>
        <authorList>
            <person name="Tschesche H."/>
            <person name="Schneider M."/>
            <person name="Reidel G."/>
            <person name="Klein H."/>
        </authorList>
    </citation>
    <scope>DISULFIDE BONDS</scope>
</reference>
<reference key="4">
    <citation type="journal article" date="1970" name="Hoppe-Seyler's Z. Physiol. Chem.">
        <title>Trypsin inhibitors. VII. Primary structure of the specific trypsin inhibitor II (Kazal-type) from porcine pancreas. Sequence analysis with mass spectrometry identification of the p-bromophenylthio-hydantoins from the Edman degradation.</title>
        <authorList>
            <person name="Tschesche H."/>
            <person name="Wachter E."/>
        </authorList>
    </citation>
    <scope>PROTEIN SEQUENCE OF A SECOND INHIBITOR</scope>
</reference>
<reference key="5">
    <citation type="journal article" date="1982" name="J. Mol. Biol.">
        <title>Three-dimensional structure of the complex between pancreatic secretory trypsin inhibitor (Kazal type) and trypsinogen at 1.8-A resolution. Structure solution, crystallographic refinement and preliminary structural interpretation.</title>
        <authorList>
            <person name="Bolognesi M."/>
            <person name="Gatti G."/>
            <person name="Menegatti E."/>
            <person name="Guarneri M."/>
            <person name="Marquart M."/>
            <person name="Papamokos E."/>
            <person name="Huber R."/>
        </authorList>
    </citation>
    <scope>X-RAY CRYSTALLOGRAPHY (1.8 ANGSTROMS)</scope>
</reference>
<organism>
    <name type="scientific">Sus scrofa</name>
    <name type="common">Pig</name>
    <dbReference type="NCBI Taxonomy" id="9823"/>
    <lineage>
        <taxon>Eukaryota</taxon>
        <taxon>Metazoa</taxon>
        <taxon>Chordata</taxon>
        <taxon>Craniata</taxon>
        <taxon>Vertebrata</taxon>
        <taxon>Euteleostomi</taxon>
        <taxon>Mammalia</taxon>
        <taxon>Eutheria</taxon>
        <taxon>Laurasiatheria</taxon>
        <taxon>Artiodactyla</taxon>
        <taxon>Suina</taxon>
        <taxon>Suidae</taxon>
        <taxon>Sus</taxon>
    </lineage>
</organism>
<keyword id="KW-0002">3D-structure</keyword>
<keyword id="KW-0903">Direct protein sequencing</keyword>
<keyword id="KW-1015">Disulfide bond</keyword>
<keyword id="KW-0646">Protease inhibitor</keyword>
<keyword id="KW-1185">Reference proteome</keyword>
<keyword id="KW-0964">Secreted</keyword>
<keyword id="KW-0722">Serine protease inhibitor</keyword>
<feature type="chain" id="PRO_0000073027" description="Serine protease inhibitor Kazal-type 1">
    <location>
        <begin position="1"/>
        <end position="56"/>
    </location>
</feature>
<feature type="domain" description="Kazal-like" evidence="2">
    <location>
        <begin position="3"/>
        <end position="56"/>
    </location>
</feature>
<feature type="site" description="Reactive bond for trypsin" evidence="1 2">
    <location>
        <begin position="18"/>
        <end position="19"/>
    </location>
</feature>
<feature type="site" description="Necessary for sperm binding" evidence="1">
    <location>
        <begin position="20"/>
        <end position="21"/>
    </location>
</feature>
<feature type="disulfide bond" evidence="2 3">
    <location>
        <begin position="9"/>
        <end position="38"/>
    </location>
</feature>
<feature type="disulfide bond" evidence="2 3">
    <location>
        <begin position="16"/>
        <end position="35"/>
    </location>
</feature>
<feature type="disulfide bond" evidence="2 3">
    <location>
        <begin position="24"/>
        <end position="56"/>
    </location>
</feature>
<feature type="sequence variant" description="In a second inhibitor.">
    <location>
        <begin position="1"/>
        <end position="4"/>
    </location>
</feature>
<feature type="strand" evidence="7">
    <location>
        <begin position="12"/>
        <end position="17"/>
    </location>
</feature>
<feature type="strand" evidence="7">
    <location>
        <begin position="23"/>
        <end position="25"/>
    </location>
</feature>
<feature type="strand" evidence="7">
    <location>
        <begin position="30"/>
        <end position="33"/>
    </location>
</feature>
<feature type="helix" evidence="7">
    <location>
        <begin position="34"/>
        <end position="42"/>
    </location>
</feature>
<feature type="strand" evidence="7">
    <location>
        <begin position="50"/>
        <end position="54"/>
    </location>
</feature>
<sequence length="56" mass="6023">TSPQREATCTSEVSGCPKIYNPVCGTDGITYSNECVLCSENKKRQTPVLIQKSGPC</sequence>
<evidence type="ECO:0000250" key="1">
    <source>
        <dbReference type="UniProtKB" id="P09036"/>
    </source>
</evidence>
<evidence type="ECO:0000255" key="2">
    <source>
        <dbReference type="PROSITE-ProRule" id="PRU00798"/>
    </source>
</evidence>
<evidence type="ECO:0000269" key="3">
    <source>
    </source>
</evidence>
<evidence type="ECO:0000269" key="4">
    <source>
    </source>
</evidence>
<evidence type="ECO:0000269" key="5">
    <source>
    </source>
</evidence>
<evidence type="ECO:0000303" key="6">
    <source>
    </source>
</evidence>
<evidence type="ECO:0007829" key="7">
    <source>
        <dbReference type="PDB" id="1TGS"/>
    </source>
</evidence>
<protein>
    <recommendedName>
        <fullName evidence="1">Serine protease inhibitor Kazal-type 1</fullName>
    </recommendedName>
    <alternativeName>
        <fullName evidence="6">Pancreatic secretory trypsin inhibitor</fullName>
    </alternativeName>
</protein>